<proteinExistence type="inferred from homology"/>
<organism>
    <name type="scientific">Shewanella amazonensis (strain ATCC BAA-1098 / SB2B)</name>
    <dbReference type="NCBI Taxonomy" id="326297"/>
    <lineage>
        <taxon>Bacteria</taxon>
        <taxon>Pseudomonadati</taxon>
        <taxon>Pseudomonadota</taxon>
        <taxon>Gammaproteobacteria</taxon>
        <taxon>Alteromonadales</taxon>
        <taxon>Shewanellaceae</taxon>
        <taxon>Shewanella</taxon>
    </lineage>
</organism>
<accession>A1S7E5</accession>
<sequence>MKVVEVKHPLVRHKIGLMREADISTKRFRELAAEVGSLLTYEATADLETETVTIEGWNGPVQVEQIKGKKVTVVPILRAGLGMMDGVLEHIPSARISVVGIYRDEETLEPVPYFEKLCSQVDERIALVVDPMLATGGSMISTIDLLKQRGCKQIKALVLVAAPEGLAALEKAHPDIELYTASIDRCLNENGYILPGLGDAGDKIFGTK</sequence>
<protein>
    <recommendedName>
        <fullName evidence="1">Uracil phosphoribosyltransferase</fullName>
        <ecNumber evidence="1">2.4.2.9</ecNumber>
    </recommendedName>
    <alternativeName>
        <fullName evidence="1">UMP pyrophosphorylase</fullName>
    </alternativeName>
    <alternativeName>
        <fullName evidence="1">UPRTase</fullName>
    </alternativeName>
</protein>
<name>UPP_SHEAM</name>
<comment type="function">
    <text evidence="1">Catalyzes the conversion of uracil and 5-phospho-alpha-D-ribose 1-diphosphate (PRPP) to UMP and diphosphate.</text>
</comment>
<comment type="catalytic activity">
    <reaction evidence="1">
        <text>UMP + diphosphate = 5-phospho-alpha-D-ribose 1-diphosphate + uracil</text>
        <dbReference type="Rhea" id="RHEA:13017"/>
        <dbReference type="ChEBI" id="CHEBI:17568"/>
        <dbReference type="ChEBI" id="CHEBI:33019"/>
        <dbReference type="ChEBI" id="CHEBI:57865"/>
        <dbReference type="ChEBI" id="CHEBI:58017"/>
        <dbReference type="EC" id="2.4.2.9"/>
    </reaction>
</comment>
<comment type="cofactor">
    <cofactor evidence="1">
        <name>Mg(2+)</name>
        <dbReference type="ChEBI" id="CHEBI:18420"/>
    </cofactor>
    <text evidence="1">Binds 1 Mg(2+) ion per subunit. The magnesium is bound as Mg-PRPP.</text>
</comment>
<comment type="activity regulation">
    <text evidence="1">Allosterically activated by GTP.</text>
</comment>
<comment type="pathway">
    <text evidence="1">Pyrimidine metabolism; UMP biosynthesis via salvage pathway; UMP from uracil: step 1/1.</text>
</comment>
<comment type="similarity">
    <text evidence="1">Belongs to the UPRTase family.</text>
</comment>
<feature type="chain" id="PRO_1000053776" description="Uracil phosphoribosyltransferase">
    <location>
        <begin position="1"/>
        <end position="208"/>
    </location>
</feature>
<feature type="binding site" evidence="1">
    <location>
        <position position="78"/>
    </location>
    <ligand>
        <name>5-phospho-alpha-D-ribose 1-diphosphate</name>
        <dbReference type="ChEBI" id="CHEBI:58017"/>
    </ligand>
</feature>
<feature type="binding site" evidence="1">
    <location>
        <position position="103"/>
    </location>
    <ligand>
        <name>5-phospho-alpha-D-ribose 1-diphosphate</name>
        <dbReference type="ChEBI" id="CHEBI:58017"/>
    </ligand>
</feature>
<feature type="binding site" evidence="1">
    <location>
        <begin position="130"/>
        <end position="138"/>
    </location>
    <ligand>
        <name>5-phospho-alpha-D-ribose 1-diphosphate</name>
        <dbReference type="ChEBI" id="CHEBI:58017"/>
    </ligand>
</feature>
<feature type="binding site" evidence="1">
    <location>
        <position position="193"/>
    </location>
    <ligand>
        <name>uracil</name>
        <dbReference type="ChEBI" id="CHEBI:17568"/>
    </ligand>
</feature>
<feature type="binding site" evidence="1">
    <location>
        <begin position="198"/>
        <end position="200"/>
    </location>
    <ligand>
        <name>uracil</name>
        <dbReference type="ChEBI" id="CHEBI:17568"/>
    </ligand>
</feature>
<feature type="binding site" evidence="1">
    <location>
        <position position="199"/>
    </location>
    <ligand>
        <name>5-phospho-alpha-D-ribose 1-diphosphate</name>
        <dbReference type="ChEBI" id="CHEBI:58017"/>
    </ligand>
</feature>
<gene>
    <name evidence="1" type="primary">upp</name>
    <name type="ordered locus">Sama_2096</name>
</gene>
<evidence type="ECO:0000255" key="1">
    <source>
        <dbReference type="HAMAP-Rule" id="MF_01218"/>
    </source>
</evidence>
<reference key="1">
    <citation type="submission" date="2006-12" db="EMBL/GenBank/DDBJ databases">
        <title>Complete sequence of Shewanella amazonensis SB2B.</title>
        <authorList>
            <consortium name="US DOE Joint Genome Institute"/>
            <person name="Copeland A."/>
            <person name="Lucas S."/>
            <person name="Lapidus A."/>
            <person name="Barry K."/>
            <person name="Detter J.C."/>
            <person name="Glavina del Rio T."/>
            <person name="Hammon N."/>
            <person name="Israni S."/>
            <person name="Dalin E."/>
            <person name="Tice H."/>
            <person name="Pitluck S."/>
            <person name="Munk A.C."/>
            <person name="Brettin T."/>
            <person name="Bruce D."/>
            <person name="Han C."/>
            <person name="Tapia R."/>
            <person name="Gilna P."/>
            <person name="Schmutz J."/>
            <person name="Larimer F."/>
            <person name="Land M."/>
            <person name="Hauser L."/>
            <person name="Kyrpides N."/>
            <person name="Mikhailova N."/>
            <person name="Fredrickson J."/>
            <person name="Richardson P."/>
        </authorList>
    </citation>
    <scope>NUCLEOTIDE SEQUENCE [LARGE SCALE GENOMIC DNA]</scope>
    <source>
        <strain>ATCC BAA-1098 / SB2B</strain>
    </source>
</reference>
<dbReference type="EC" id="2.4.2.9" evidence="1"/>
<dbReference type="EMBL" id="CP000507">
    <property type="protein sequence ID" value="ABM00302.1"/>
    <property type="molecule type" value="Genomic_DNA"/>
</dbReference>
<dbReference type="RefSeq" id="WP_011760209.1">
    <property type="nucleotide sequence ID" value="NC_008700.1"/>
</dbReference>
<dbReference type="SMR" id="A1S7E5"/>
<dbReference type="STRING" id="326297.Sama_2096"/>
<dbReference type="KEGG" id="saz:Sama_2096"/>
<dbReference type="eggNOG" id="COG0035">
    <property type="taxonomic scope" value="Bacteria"/>
</dbReference>
<dbReference type="HOGENOM" id="CLU_067096_2_2_6"/>
<dbReference type="OrthoDB" id="9781675at2"/>
<dbReference type="UniPathway" id="UPA00574">
    <property type="reaction ID" value="UER00636"/>
</dbReference>
<dbReference type="Proteomes" id="UP000009175">
    <property type="component" value="Chromosome"/>
</dbReference>
<dbReference type="GO" id="GO:0005525">
    <property type="term" value="F:GTP binding"/>
    <property type="evidence" value="ECO:0007669"/>
    <property type="project" value="UniProtKB-KW"/>
</dbReference>
<dbReference type="GO" id="GO:0000287">
    <property type="term" value="F:magnesium ion binding"/>
    <property type="evidence" value="ECO:0007669"/>
    <property type="project" value="UniProtKB-UniRule"/>
</dbReference>
<dbReference type="GO" id="GO:0004845">
    <property type="term" value="F:uracil phosphoribosyltransferase activity"/>
    <property type="evidence" value="ECO:0007669"/>
    <property type="project" value="UniProtKB-UniRule"/>
</dbReference>
<dbReference type="GO" id="GO:0044206">
    <property type="term" value="P:UMP salvage"/>
    <property type="evidence" value="ECO:0007669"/>
    <property type="project" value="UniProtKB-UniRule"/>
</dbReference>
<dbReference type="GO" id="GO:0006223">
    <property type="term" value="P:uracil salvage"/>
    <property type="evidence" value="ECO:0007669"/>
    <property type="project" value="InterPro"/>
</dbReference>
<dbReference type="CDD" id="cd06223">
    <property type="entry name" value="PRTases_typeI"/>
    <property type="match status" value="1"/>
</dbReference>
<dbReference type="FunFam" id="3.40.50.2020:FF:000003">
    <property type="entry name" value="Uracil phosphoribosyltransferase"/>
    <property type="match status" value="1"/>
</dbReference>
<dbReference type="Gene3D" id="3.40.50.2020">
    <property type="match status" value="1"/>
</dbReference>
<dbReference type="HAMAP" id="MF_01218_B">
    <property type="entry name" value="Upp_B"/>
    <property type="match status" value="1"/>
</dbReference>
<dbReference type="InterPro" id="IPR000836">
    <property type="entry name" value="PRibTrfase_dom"/>
</dbReference>
<dbReference type="InterPro" id="IPR029057">
    <property type="entry name" value="PRTase-like"/>
</dbReference>
<dbReference type="InterPro" id="IPR034332">
    <property type="entry name" value="Upp_B"/>
</dbReference>
<dbReference type="InterPro" id="IPR050054">
    <property type="entry name" value="UPRTase/APRTase"/>
</dbReference>
<dbReference type="InterPro" id="IPR005765">
    <property type="entry name" value="Ura_phspho_trans"/>
</dbReference>
<dbReference type="NCBIfam" id="NF001097">
    <property type="entry name" value="PRK00129.1"/>
    <property type="match status" value="1"/>
</dbReference>
<dbReference type="NCBIfam" id="TIGR01091">
    <property type="entry name" value="upp"/>
    <property type="match status" value="1"/>
</dbReference>
<dbReference type="PANTHER" id="PTHR32315">
    <property type="entry name" value="ADENINE PHOSPHORIBOSYLTRANSFERASE"/>
    <property type="match status" value="1"/>
</dbReference>
<dbReference type="PANTHER" id="PTHR32315:SF4">
    <property type="entry name" value="URACIL PHOSPHORIBOSYLTRANSFERASE, CHLOROPLASTIC"/>
    <property type="match status" value="1"/>
</dbReference>
<dbReference type="Pfam" id="PF14681">
    <property type="entry name" value="UPRTase"/>
    <property type="match status" value="1"/>
</dbReference>
<dbReference type="SUPFAM" id="SSF53271">
    <property type="entry name" value="PRTase-like"/>
    <property type="match status" value="1"/>
</dbReference>
<keyword id="KW-0021">Allosteric enzyme</keyword>
<keyword id="KW-0328">Glycosyltransferase</keyword>
<keyword id="KW-0342">GTP-binding</keyword>
<keyword id="KW-0460">Magnesium</keyword>
<keyword id="KW-0547">Nucleotide-binding</keyword>
<keyword id="KW-1185">Reference proteome</keyword>
<keyword id="KW-0808">Transferase</keyword>